<keyword id="KW-0997">Cell inner membrane</keyword>
<keyword id="KW-1003">Cell membrane</keyword>
<keyword id="KW-0378">Hydrolase</keyword>
<keyword id="KW-0472">Membrane</keyword>
<keyword id="KW-0479">Metal-binding</keyword>
<keyword id="KW-0482">Metalloprotease</keyword>
<keyword id="KW-0645">Protease</keyword>
<keyword id="KW-1185">Reference proteome</keyword>
<keyword id="KW-0812">Transmembrane</keyword>
<keyword id="KW-1133">Transmembrane helix</keyword>
<keyword id="KW-0862">Zinc</keyword>
<feature type="chain" id="PRO_0000138878" description="Protease HtpX homolog">
    <location>
        <begin position="1"/>
        <end position="279"/>
    </location>
</feature>
<feature type="transmembrane region" description="Helical" evidence="1">
    <location>
        <begin position="4"/>
        <end position="24"/>
    </location>
</feature>
<feature type="transmembrane region" description="Helical" evidence="1">
    <location>
        <begin position="34"/>
        <end position="54"/>
    </location>
</feature>
<feature type="transmembrane region" description="Helical" evidence="1">
    <location>
        <begin position="155"/>
        <end position="175"/>
    </location>
</feature>
<feature type="transmembrane region" description="Helical" evidence="1">
    <location>
        <begin position="189"/>
        <end position="209"/>
    </location>
</feature>
<feature type="active site" evidence="1">
    <location>
        <position position="141"/>
    </location>
</feature>
<feature type="binding site" evidence="1">
    <location>
        <position position="140"/>
    </location>
    <ligand>
        <name>Zn(2+)</name>
        <dbReference type="ChEBI" id="CHEBI:29105"/>
        <note>catalytic</note>
    </ligand>
</feature>
<feature type="binding site" evidence="1">
    <location>
        <position position="144"/>
    </location>
    <ligand>
        <name>Zn(2+)</name>
        <dbReference type="ChEBI" id="CHEBI:29105"/>
        <note>catalytic</note>
    </ligand>
</feature>
<feature type="binding site" evidence="1">
    <location>
        <position position="215"/>
    </location>
    <ligand>
        <name>Zn(2+)</name>
        <dbReference type="ChEBI" id="CHEBI:29105"/>
        <note>catalytic</note>
    </ligand>
</feature>
<reference key="1">
    <citation type="journal article" date="2000" name="Science">
        <title>Complete genome sequence of Neisseria meningitidis serogroup B strain MC58.</title>
        <authorList>
            <person name="Tettelin H."/>
            <person name="Saunders N.J."/>
            <person name="Heidelberg J.F."/>
            <person name="Jeffries A.C."/>
            <person name="Nelson K.E."/>
            <person name="Eisen J.A."/>
            <person name="Ketchum K.A."/>
            <person name="Hood D.W."/>
            <person name="Peden J.F."/>
            <person name="Dodson R.J."/>
            <person name="Nelson W.C."/>
            <person name="Gwinn M.L."/>
            <person name="DeBoy R.T."/>
            <person name="Peterson J.D."/>
            <person name="Hickey E.K."/>
            <person name="Haft D.H."/>
            <person name="Salzberg S.L."/>
            <person name="White O."/>
            <person name="Fleischmann R.D."/>
            <person name="Dougherty B.A."/>
            <person name="Mason T.M."/>
            <person name="Ciecko A."/>
            <person name="Parksey D.S."/>
            <person name="Blair E."/>
            <person name="Cittone H."/>
            <person name="Clark E.B."/>
            <person name="Cotton M.D."/>
            <person name="Utterback T.R."/>
            <person name="Khouri H.M."/>
            <person name="Qin H."/>
            <person name="Vamathevan J.J."/>
            <person name="Gill J."/>
            <person name="Scarlato V."/>
            <person name="Masignani V."/>
            <person name="Pizza M."/>
            <person name="Grandi G."/>
            <person name="Sun L."/>
            <person name="Smith H.O."/>
            <person name="Fraser C.M."/>
            <person name="Moxon E.R."/>
            <person name="Rappuoli R."/>
            <person name="Venter J.C."/>
        </authorList>
    </citation>
    <scope>NUCLEOTIDE SEQUENCE [LARGE SCALE GENOMIC DNA]</scope>
    <source>
        <strain>ATCC BAA-335 / MC58</strain>
    </source>
</reference>
<proteinExistence type="inferred from homology"/>
<protein>
    <recommendedName>
        <fullName evidence="1">Protease HtpX homolog</fullName>
        <ecNumber evidence="1">3.4.24.-</ecNumber>
    </recommendedName>
</protein>
<comment type="cofactor">
    <cofactor evidence="1">
        <name>Zn(2+)</name>
        <dbReference type="ChEBI" id="CHEBI:29105"/>
    </cofactor>
    <text evidence="1">Binds 1 zinc ion per subunit.</text>
</comment>
<comment type="subcellular location">
    <subcellularLocation>
        <location evidence="1">Cell inner membrane</location>
        <topology evidence="1">Multi-pass membrane protein</topology>
    </subcellularLocation>
</comment>
<comment type="similarity">
    <text evidence="1">Belongs to the peptidase M48B family.</text>
</comment>
<comment type="sequence caution" evidence="2">
    <conflict type="erroneous initiation">
        <sequence resource="EMBL-CDS" id="AAF41235"/>
    </conflict>
    <text>Extended N-terminus.</text>
</comment>
<dbReference type="EC" id="3.4.24.-" evidence="1"/>
<dbReference type="EMBL" id="AE002098">
    <property type="protein sequence ID" value="AAF41235.1"/>
    <property type="status" value="ALT_INIT"/>
    <property type="molecule type" value="Genomic_DNA"/>
</dbReference>
<dbReference type="PIR" id="E81154">
    <property type="entry name" value="E81154"/>
</dbReference>
<dbReference type="RefSeq" id="NP_273864.1">
    <property type="nucleotide sequence ID" value="NC_003112.2"/>
</dbReference>
<dbReference type="RefSeq" id="WP_002219495.1">
    <property type="nucleotide sequence ID" value="NC_003112.2"/>
</dbReference>
<dbReference type="SMR" id="Q9K006"/>
<dbReference type="FunCoup" id="Q9K006">
    <property type="interactions" value="205"/>
</dbReference>
<dbReference type="STRING" id="122586.NMB0822"/>
<dbReference type="MEROPS" id="M48.002"/>
<dbReference type="PaxDb" id="122586-NMB0822"/>
<dbReference type="KEGG" id="nme:NMB0822"/>
<dbReference type="PATRIC" id="fig|122586.8.peg.1033"/>
<dbReference type="HOGENOM" id="CLU_042266_1_0_4"/>
<dbReference type="InParanoid" id="Q9K006"/>
<dbReference type="OrthoDB" id="15218at2"/>
<dbReference type="Proteomes" id="UP000000425">
    <property type="component" value="Chromosome"/>
</dbReference>
<dbReference type="GO" id="GO:0005886">
    <property type="term" value="C:plasma membrane"/>
    <property type="evidence" value="ECO:0007669"/>
    <property type="project" value="UniProtKB-SubCell"/>
</dbReference>
<dbReference type="GO" id="GO:0004222">
    <property type="term" value="F:metalloendopeptidase activity"/>
    <property type="evidence" value="ECO:0007669"/>
    <property type="project" value="UniProtKB-UniRule"/>
</dbReference>
<dbReference type="GO" id="GO:0008270">
    <property type="term" value="F:zinc ion binding"/>
    <property type="evidence" value="ECO:0007669"/>
    <property type="project" value="UniProtKB-UniRule"/>
</dbReference>
<dbReference type="GO" id="GO:0006508">
    <property type="term" value="P:proteolysis"/>
    <property type="evidence" value="ECO:0007669"/>
    <property type="project" value="UniProtKB-KW"/>
</dbReference>
<dbReference type="CDD" id="cd07335">
    <property type="entry name" value="M48B_HtpX_like"/>
    <property type="match status" value="1"/>
</dbReference>
<dbReference type="Gene3D" id="3.30.2010.10">
    <property type="entry name" value="Metalloproteases ('zincins'), catalytic domain"/>
    <property type="match status" value="1"/>
</dbReference>
<dbReference type="HAMAP" id="MF_00188">
    <property type="entry name" value="Pept_M48_protease_HtpX"/>
    <property type="match status" value="1"/>
</dbReference>
<dbReference type="InterPro" id="IPR050083">
    <property type="entry name" value="HtpX_protease"/>
</dbReference>
<dbReference type="InterPro" id="IPR022919">
    <property type="entry name" value="Pept_M48_protease_HtpX"/>
</dbReference>
<dbReference type="InterPro" id="IPR001915">
    <property type="entry name" value="Peptidase_M48"/>
</dbReference>
<dbReference type="NCBIfam" id="NF003965">
    <property type="entry name" value="PRK05457.1"/>
    <property type="match status" value="1"/>
</dbReference>
<dbReference type="PANTHER" id="PTHR43221">
    <property type="entry name" value="PROTEASE HTPX"/>
    <property type="match status" value="1"/>
</dbReference>
<dbReference type="PANTHER" id="PTHR43221:SF1">
    <property type="entry name" value="PROTEASE HTPX"/>
    <property type="match status" value="1"/>
</dbReference>
<dbReference type="Pfam" id="PF01435">
    <property type="entry name" value="Peptidase_M48"/>
    <property type="match status" value="1"/>
</dbReference>
<dbReference type="PROSITE" id="PS00142">
    <property type="entry name" value="ZINC_PROTEASE"/>
    <property type="match status" value="1"/>
</dbReference>
<name>HTPX_NEIMB</name>
<organism>
    <name type="scientific">Neisseria meningitidis serogroup B (strain ATCC BAA-335 / MC58)</name>
    <dbReference type="NCBI Taxonomy" id="122586"/>
    <lineage>
        <taxon>Bacteria</taxon>
        <taxon>Pseudomonadati</taxon>
        <taxon>Pseudomonadota</taxon>
        <taxon>Betaproteobacteria</taxon>
        <taxon>Neisseriales</taxon>
        <taxon>Neisseriaceae</taxon>
        <taxon>Neisseria</taxon>
    </lineage>
</organism>
<evidence type="ECO:0000255" key="1">
    <source>
        <dbReference type="HAMAP-Rule" id="MF_00188"/>
    </source>
</evidence>
<evidence type="ECO:0000305" key="2"/>
<gene>
    <name evidence="1" type="primary">htpX</name>
    <name type="ordered locus">NMB0822</name>
</gene>
<sequence length="279" mass="30202">MKRIFLFLATNIAVLVVINIVLAVLGINSRGGTGSLLAYSAVVGFTGSIISLLMSKFIAKQSVGAEVIDTPRTEEEAWLLNTVEAQARQWNLKTPEVAIYHSPEPNAFATGASRNSSLIAVSTGLLDHMTRDEVEAVLAHEMAHVGNGDMVTLTLIQGVVNTFVVFLSRIIANLIARNNDGSQSQGTYFLVSMVFQILFGFLASLIVMWFSRQREYRADAGAAKLVGAPKMISALQRLKGNPVDLPEEMNAMGIAGDTRDSLLSTHPSLDNRIARLKSL</sequence>
<accession>Q9K006</accession>